<keyword id="KW-1185">Reference proteome</keyword>
<organism>
    <name type="scientific">Rhizobium etli (strain ATCC 51251 / DSM 11541 / JCM 21823 / NBRC 15573 / CFN 42)</name>
    <dbReference type="NCBI Taxonomy" id="347834"/>
    <lineage>
        <taxon>Bacteria</taxon>
        <taxon>Pseudomonadati</taxon>
        <taxon>Pseudomonadota</taxon>
        <taxon>Alphaproteobacteria</taxon>
        <taxon>Hyphomicrobiales</taxon>
        <taxon>Rhizobiaceae</taxon>
        <taxon>Rhizobium/Agrobacterium group</taxon>
        <taxon>Rhizobium</taxon>
    </lineage>
</organism>
<sequence>MPKGERLFMASLDQIIDDFVFLDDWEDRYRYVIELGKALPELAEEKRTPENKVMGCASQVWLVTHTSGDPENPIMSFEGDSDAHIVRGLVAIVLATYSGKPASEIAALDAFEIFSKIGLVENLSSQRSNGLRSMVKRIREEAKVRAAA</sequence>
<evidence type="ECO:0000305" key="1"/>
<comment type="similarity">
    <text evidence="1">Belongs to the SufE family.</text>
</comment>
<comment type="sequence caution" evidence="1">
    <conflict type="erroneous initiation">
        <sequence resource="EMBL-CDS" id="ABC90055"/>
    </conflict>
    <text>Extended N-terminus.</text>
</comment>
<accession>Q52742</accession>
<accession>Q2KAT1</accession>
<name>Y1250_RHIEC</name>
<proteinExistence type="inferred from homology"/>
<reference key="1">
    <citation type="journal article" date="1997" name="Mol. Plant Microbe Interact.">
        <title>rosR, a determinant of nodulation competitiveness in Rhizobium etli.</title>
        <authorList>
            <person name="Bittinger M.A."/>
            <person name="Milner J.L."/>
            <person name="Saville B.J."/>
            <person name="Handelsman J."/>
        </authorList>
    </citation>
    <scope>NUCLEOTIDE SEQUENCE [GENOMIC DNA]</scope>
    <source>
        <strain>CE3</strain>
    </source>
</reference>
<reference key="2">
    <citation type="journal article" date="2006" name="Proc. Natl. Acad. Sci. U.S.A.">
        <title>The partitioned Rhizobium etli genome: genetic and metabolic redundancy in seven interacting replicons.</title>
        <authorList>
            <person name="Gonzalez V."/>
            <person name="Santamaria R.I."/>
            <person name="Bustos P."/>
            <person name="Hernandez-Gonzalez I."/>
            <person name="Medrano-Soto A."/>
            <person name="Moreno-Hagelsieb G."/>
            <person name="Janga S.C."/>
            <person name="Ramirez M.A."/>
            <person name="Jimenez-Jacinto V."/>
            <person name="Collado-Vides J."/>
            <person name="Davila G."/>
        </authorList>
    </citation>
    <scope>NUCLEOTIDE SEQUENCE [LARGE SCALE GENOMIC DNA]</scope>
    <source>
        <strain>ATCC 51251 / DSM 11541 / JCM 21823 / NBRC 15573 / CFN 42</strain>
    </source>
</reference>
<gene>
    <name type="ordered locus">RHE_CH01250</name>
</gene>
<feature type="chain" id="PRO_0000202143" description="Uncharacterized SufE-like protein RHE_CH01250">
    <location>
        <begin position="1"/>
        <end position="148"/>
    </location>
</feature>
<feature type="sequence conflict" description="In Ref. 1; AAC44879." evidence="1" ref="1">
    <original>KRIREEAKVRAAA</original>
    <variation>NGSGKRRKSAPRPERD</variation>
    <location>
        <begin position="136"/>
        <end position="148"/>
    </location>
</feature>
<dbReference type="EMBL" id="U61146">
    <property type="protein sequence ID" value="AAC44879.1"/>
    <property type="molecule type" value="Genomic_DNA"/>
</dbReference>
<dbReference type="EMBL" id="CP000133">
    <property type="protein sequence ID" value="ABC90055.1"/>
    <property type="status" value="ALT_INIT"/>
    <property type="molecule type" value="Genomic_DNA"/>
</dbReference>
<dbReference type="SMR" id="Q52742"/>
<dbReference type="KEGG" id="ret:RHE_CH01250"/>
<dbReference type="eggNOG" id="COG2166">
    <property type="taxonomic scope" value="Bacteria"/>
</dbReference>
<dbReference type="HOGENOM" id="CLU_124502_1_0_5"/>
<dbReference type="Proteomes" id="UP000001936">
    <property type="component" value="Chromosome"/>
</dbReference>
<dbReference type="Gene3D" id="3.90.1010.10">
    <property type="match status" value="1"/>
</dbReference>
<dbReference type="InterPro" id="IPR003808">
    <property type="entry name" value="Fe-S_metab-assoc_dom"/>
</dbReference>
<dbReference type="PANTHER" id="PTHR43597:SF5">
    <property type="entry name" value="SUFE-LIKE PROTEIN 2, CHLOROPLASTIC"/>
    <property type="match status" value="1"/>
</dbReference>
<dbReference type="PANTHER" id="PTHR43597">
    <property type="entry name" value="SULFUR ACCEPTOR PROTEIN CSDE"/>
    <property type="match status" value="1"/>
</dbReference>
<dbReference type="Pfam" id="PF02657">
    <property type="entry name" value="SufE"/>
    <property type="match status" value="1"/>
</dbReference>
<dbReference type="SUPFAM" id="SSF82649">
    <property type="entry name" value="SufE/NifU"/>
    <property type="match status" value="1"/>
</dbReference>
<protein>
    <recommendedName>
        <fullName>Uncharacterized SufE-like protein RHE_CH01250</fullName>
    </recommendedName>
</protein>